<feature type="signal peptide">
    <location>
        <begin position="1"/>
        <end position="19"/>
    </location>
</feature>
<feature type="chain" id="PRO_0000014856" description="Myelin-associated glycoprotein">
    <location>
        <begin position="20"/>
        <end position="626"/>
    </location>
</feature>
<feature type="topological domain" description="Extracellular" evidence="3">
    <location>
        <begin position="20"/>
        <end position="516"/>
    </location>
</feature>
<feature type="transmembrane region" description="Helical" evidence="3">
    <location>
        <begin position="517"/>
        <end position="536"/>
    </location>
</feature>
<feature type="topological domain" description="Cytoplasmic" evidence="3">
    <location>
        <begin position="537"/>
        <end position="626"/>
    </location>
</feature>
<feature type="domain" description="Ig-like V-type">
    <location>
        <begin position="22"/>
        <end position="120"/>
    </location>
</feature>
<feature type="domain" description="Ig-like C2-type 1">
    <location>
        <begin position="139"/>
        <end position="237"/>
    </location>
</feature>
<feature type="domain" description="Ig-like C2-type 2">
    <location>
        <begin position="241"/>
        <end position="325"/>
    </location>
</feature>
<feature type="domain" description="Ig-like C2-type 3">
    <location>
        <begin position="327"/>
        <end position="412"/>
    </location>
</feature>
<feature type="domain" description="Ig-like C2-type 4">
    <location>
        <begin position="413"/>
        <end position="508"/>
    </location>
</feature>
<feature type="region of interest" description="Interaction with RTN4R and RTN4RL2" evidence="1">
    <location>
        <begin position="20"/>
        <end position="325"/>
    </location>
</feature>
<feature type="region of interest" description="Required for normal axon myelination in the central nervous system" evidence="2">
    <location>
        <begin position="577"/>
        <end position="626"/>
    </location>
</feature>
<feature type="region of interest" description="Disordered" evidence="5">
    <location>
        <begin position="582"/>
        <end position="608"/>
    </location>
</feature>
<feature type="binding site" evidence="2">
    <location>
        <begin position="65"/>
        <end position="67"/>
    </location>
    <ligand>
        <name>a ganglioside GT1b (d18:1(4E))</name>
        <dbReference type="ChEBI" id="CHEBI:78452"/>
    </ligand>
</feature>
<feature type="binding site" evidence="2">
    <location>
        <position position="118"/>
    </location>
    <ligand>
        <name>a ganglioside GT1b (d18:1(4E))</name>
        <dbReference type="ChEBI" id="CHEBI:78452"/>
    </ligand>
</feature>
<feature type="binding site" evidence="2">
    <location>
        <begin position="124"/>
        <end position="128"/>
    </location>
    <ligand>
        <name>a ganglioside GT1b (d18:1(4E))</name>
        <dbReference type="ChEBI" id="CHEBI:78452"/>
    </ligand>
</feature>
<feature type="site" description="Not glycosylated" evidence="12">
    <location>
        <position position="332"/>
    </location>
</feature>
<feature type="modified residue" description="Phosphoserine" evidence="1">
    <location>
        <position position="545"/>
    </location>
</feature>
<feature type="modified residue" description="Phosphoserine" evidence="1">
    <location>
        <position position="547"/>
    </location>
</feature>
<feature type="modified residue" description="Phosphoserine" evidence="1">
    <location>
        <position position="549"/>
    </location>
</feature>
<feature type="lipid moiety-binding region" description="S-palmitoyl cysteine" evidence="1">
    <location>
        <position position="531"/>
    </location>
</feature>
<feature type="glycosylation site" description="N-linked (GlcNAc...) asparagine" evidence="12">
    <location>
        <position position="99"/>
    </location>
</feature>
<feature type="glycosylation site" description="N-linked (GlcNAc...) asparagine; partial" evidence="12">
    <location>
        <position position="106"/>
    </location>
</feature>
<feature type="glycosylation site" description="N-linked (GlcNAc...) asparagine" evidence="12">
    <location>
        <position position="223"/>
    </location>
</feature>
<feature type="glycosylation site" description="N-linked (GlcNAc...) asparagine" evidence="12">
    <location>
        <position position="246"/>
    </location>
</feature>
<feature type="glycosylation site" description="N-linked (GlcNAc...) asparagine" evidence="12">
    <location>
        <position position="315"/>
    </location>
</feature>
<feature type="glycosylation site" description="N-linked (GlcNAc...) asparagine" evidence="12">
    <location>
        <position position="406"/>
    </location>
</feature>
<feature type="glycosylation site" description="N-linked (GlcNAc...) asparagine" evidence="12">
    <location>
        <position position="450"/>
    </location>
</feature>
<feature type="glycosylation site" description="N-linked (GlcNAc...) asparagine" evidence="12">
    <location>
        <position position="454"/>
    </location>
</feature>
<feature type="disulfide bond" evidence="4">
    <location>
        <begin position="37"/>
        <end position="165"/>
    </location>
</feature>
<feature type="disulfide bond" evidence="4">
    <location>
        <begin position="42"/>
        <end position="100"/>
    </location>
</feature>
<feature type="disulfide bond" evidence="4">
    <location>
        <begin position="159"/>
        <end position="217"/>
    </location>
</feature>
<feature type="disulfide bond" evidence="4">
    <location>
        <begin position="261"/>
        <end position="305"/>
    </location>
</feature>
<feature type="disulfide bond" evidence="4">
    <location>
        <begin position="347"/>
        <end position="392"/>
    </location>
</feature>
<feature type="disulfide bond" evidence="4">
    <location>
        <begin position="421"/>
        <end position="430"/>
    </location>
</feature>
<feature type="disulfide bond" evidence="4">
    <location>
        <begin position="432"/>
        <end position="488"/>
    </location>
</feature>
<feature type="splice variant" id="VSP_045843" description="In isoform 3." evidence="14">
    <location>
        <begin position="1"/>
        <end position="25"/>
    </location>
</feature>
<feature type="splice variant" id="VSP_042688" description="In isoform 2." evidence="15 16">
    <original>ERRLGSERRLLGLRGEPPELDLSYSHSDLGKRPTKDSYTLTEELAEYAEIRVK</original>
    <variation>KEVSTLESH</variation>
    <location>
        <begin position="574"/>
        <end position="626"/>
    </location>
</feature>
<feature type="sequence variant" id="VAR_077495" description="In SPG75; uncertain significance; dbSNP:rs762045079." evidence="10">
    <original>R</original>
    <variation>H</variation>
    <location>
        <position position="118"/>
    </location>
</feature>
<feature type="sequence variant" id="VAR_076224" description="In SPG75; alters proper folding; impairs N-glycosylation; retained in the endoplasmic reticulum; increased proteasome-dependent degradation; dbSNP:rs2301600." evidence="9">
    <original>S</original>
    <variation>R</variation>
    <location>
        <position position="133"/>
    </location>
</feature>
<feature type="sequence variant" id="VAR_059399" description="In dbSNP:rs11084810." evidence="6">
    <original>L</original>
    <variation>M</variation>
    <location>
        <position position="202"/>
    </location>
</feature>
<feature type="sequence variant" id="VAR_076225" description="In SPG75; uncertain significance; dbSNP:rs587777229." evidence="8">
    <original>C</original>
    <variation>G</variation>
    <location>
        <position position="430"/>
    </location>
</feature>
<feature type="sequence conflict" description="In Ref. 2." evidence="17" ref="2">
    <original>T</original>
    <variation>S</variation>
    <location>
        <position position="614"/>
    </location>
</feature>
<keyword id="KW-0025">Alternative splicing</keyword>
<keyword id="KW-0130">Cell adhesion</keyword>
<keyword id="KW-1003">Cell membrane</keyword>
<keyword id="KW-0225">Disease variant</keyword>
<keyword id="KW-1015">Disulfide bond</keyword>
<keyword id="KW-0325">Glycoprotein</keyword>
<keyword id="KW-0890">Hereditary spastic paraplegia</keyword>
<keyword id="KW-0393">Immunoglobulin domain</keyword>
<keyword id="KW-0430">Lectin</keyword>
<keyword id="KW-0446">Lipid-binding</keyword>
<keyword id="KW-0449">Lipoprotein</keyword>
<keyword id="KW-0472">Membrane</keyword>
<keyword id="KW-0523">Neurodegeneration</keyword>
<keyword id="KW-0564">Palmitate</keyword>
<keyword id="KW-0597">Phosphoprotein</keyword>
<keyword id="KW-1267">Proteomics identification</keyword>
<keyword id="KW-1185">Reference proteome</keyword>
<keyword id="KW-0677">Repeat</keyword>
<keyword id="KW-0732">Signal</keyword>
<keyword id="KW-0812">Transmembrane</keyword>
<keyword id="KW-1133">Transmembrane helix</keyword>
<keyword id="KW-0832">Ubl conjugation</keyword>
<comment type="function">
    <text evidence="1 2">Adhesion molecule that mediates interactions between myelinating cells and neurons by binding to neuronal sialic acid-containing gangliosides and to the glycoproteins RTN4R and RTN4RL2 (By similarity). Not required for initial myelination, but seems to play a role in the maintenance of normal axon myelination. Protects motoneurons against apoptosis, also after injury; protection against apoptosis is probably mediated via interaction with neuronal RTN4R and RTN4RL2. Required to prevent degeneration of myelinated axons in adults; this probably depends on binding to gangliosides on the axon cell membrane (By similarity). Negative regulator of neurite outgrowth; in dorsal root ganglion neurons the inhibition is mediated primarily via binding to neuronal RTN4R or RTN4RL2 and to a lesser degree via binding to neuronal gangliosides. In cerebellar granule cells the inhibition is mediated primarily via binding to neuronal gangliosides. In sensory neurons, inhibition of neurite extension depends only partially on RTN4R, RTN4RL2 and gangliosides. Inhibits axon longitudinal growth (By similarity). Inhibits axon outgrowth by binding to RTN4R (By similarity). Preferentially binds to alpha-2,3-linked sialic acid. Binds ganglioside Gt1b (By similarity).</text>
</comment>
<comment type="subunit">
    <text evidence="1 2 7">Monomer and homodimer (By similarity). Interacts (via the first three N-terminal Ig-like domains) with RTN4R and RTN4RL2 (By similarity). Interacts with RTN4R (PubMed:19052207). Interacts with isoform 2 of BSG (By similarity).</text>
</comment>
<comment type="subcellular location">
    <subcellularLocation>
        <location evidence="9">Cell membrane</location>
        <topology evidence="9">Single-pass type I membrane protein</topology>
    </subcellularLocation>
    <subcellularLocation>
        <location evidence="1">Membrane raft</location>
    </subcellularLocation>
</comment>
<comment type="alternative products">
    <event type="alternative splicing"/>
    <isoform>
        <id>P20916-1</id>
        <name>1</name>
        <name evidence="16">L-MAG</name>
        <sequence type="displayed"/>
    </isoform>
    <isoform>
        <id>P20916-2</id>
        <name>2</name>
        <name evidence="16">S-MAG</name>
        <sequence type="described" ref="VSP_042688"/>
    </isoform>
    <isoform>
        <id>P20916-3</id>
        <name>3</name>
        <sequence type="described" ref="VSP_045843"/>
    </isoform>
</comment>
<comment type="tissue specificity">
    <text evidence="11 13">Both isoform 1 and isoform 2 are detected in myelinated structures in the central and peripheral nervous system, in periaxonal myelin and at Schmidt-Lanterman incisures (PubMed:6200494, PubMed:9495552). Detected in optic nerve, in oligodendroglia and in periaxonal myelin sheaths (PubMed:6200494). Detected in compact myelin (at protein level) (PubMed:6200494). Both isoform 1 and isoform 2 are detected in the central and peripheral nervous system (PubMed:9495552).</text>
</comment>
<comment type="PTM">
    <text evidence="9">N-glycosylated.</text>
</comment>
<comment type="PTM">
    <text evidence="1">Phosphorylated on tyrosine residues.</text>
</comment>
<comment type="PTM">
    <text evidence="2">Ubiquitinated, leading to proteasomal degradation.</text>
</comment>
<comment type="disease" evidence="8 9 10">
    <disease id="DI-04593">
        <name>Spastic paraplegia 75, autosomal recessive</name>
        <acronym>SPG75</acronym>
        <description>A form of spastic paraplegia, a neurodegenerative disorder characterized by a slow, gradual, progressive weakness and spasticity of the lower limbs. Rate of progression and the severity of symptoms are quite variable. Initial symptoms may include difficulty with balance, weakness and stiffness in the legs, muscle spasms, and dragging the toes when walking. In some forms of the disorder, bladder symptoms (such as incontinence) may appear, or the weakness and stiffness may spread to other parts of the body. SPG75 is characterized by onset in early childhood and is associated with mild to moderate cognitive impairment.</description>
        <dbReference type="MIM" id="616680"/>
    </disease>
    <text>The disease is caused by variants affecting the gene represented in this entry.</text>
</comment>
<comment type="similarity">
    <text evidence="17">Belongs to the immunoglobulin superfamily. SIGLEC (sialic acid binding Ig-like lectin) family.</text>
</comment>
<comment type="online information" name="Functional Glycomics Gateway - Glycan Binding">
    <link uri="http://www.functionalglycomics.org/glycomics/GBPServlet?&amp;operationType=view&amp;cbpId=cbp_hum_Itlect_271"/>
    <text>Siglec-4</text>
</comment>
<gene>
    <name type="primary">MAG</name>
    <name type="synonym">GMA</name>
</gene>
<sequence>MIFLTALPLFWIMISASRGGHWGAWMPSSISAFEGTCVSIPCRFDFPDELRPAVVHGVWYFNSPYPKNYPPVVFKSRTQVVHESFQGRSRLLGDLGLRNCTLLLSNVSPELGGKYYFRGDLGGYNQYTFSEHSVLDIVNTPNIVVPPEVVAGTEVEVSCMVPDNCPELRPELSWLGHEGLGEPAVLGRLREDEGTWVQVSLLHFVPTREANGHRLGCQASFPNTTLQFEGYASMDVKYPPVIVEMNSSVEAIEGSHVSLLCGADSNPPPLLTWMRDGTVLREAVAESLLLELEEVTPAEDGVYACLAENAYGQDNRTVGLSVMYAPWKPTVNGTMVAVEGETVSILCSTQSNPDPILTIFKEKQILSTVIYESELQLELPAVSPEDDGEYWCVAENQYGQRATAFNLSVEFAPVLLLESHCAAARDTVQCLCVVKSNPEPSVAFELPSRNVTVNESEREFVYSERSGLVLTSILTLRGQAQAPPRVICTARNLYGAKSLELPFQGAHRLMWAKIGPVGAVVAFAILIAIVCYITQTRRKKNVTESPSFSAGDNPPVLFSSDFRISGAPEKYESERRLGSERRLLGLRGEPPELDLSYSHSDLGKRPTKDSYTLTEELAEYAEIRVK</sequence>
<evidence type="ECO:0000250" key="1">
    <source>
        <dbReference type="UniProtKB" id="P07722"/>
    </source>
</evidence>
<evidence type="ECO:0000250" key="2">
    <source>
        <dbReference type="UniProtKB" id="P20917"/>
    </source>
</evidence>
<evidence type="ECO:0000255" key="3"/>
<evidence type="ECO:0000255" key="4">
    <source>
        <dbReference type="PROSITE-ProRule" id="PRU00114"/>
    </source>
</evidence>
<evidence type="ECO:0000256" key="5">
    <source>
        <dbReference type="SAM" id="MobiDB-lite"/>
    </source>
</evidence>
<evidence type="ECO:0000269" key="6">
    <source>
    </source>
</evidence>
<evidence type="ECO:0000269" key="7">
    <source>
    </source>
</evidence>
<evidence type="ECO:0000269" key="8">
    <source>
    </source>
</evidence>
<evidence type="ECO:0000269" key="9">
    <source>
    </source>
</evidence>
<evidence type="ECO:0000269" key="10">
    <source>
    </source>
</evidence>
<evidence type="ECO:0000269" key="11">
    <source>
    </source>
</evidence>
<evidence type="ECO:0000269" key="12">
    <source>
    </source>
</evidence>
<evidence type="ECO:0000269" key="13">
    <source>
    </source>
</evidence>
<evidence type="ECO:0000303" key="14">
    <source>
    </source>
</evidence>
<evidence type="ECO:0000303" key="15">
    <source>
    </source>
</evidence>
<evidence type="ECO:0000303" key="16">
    <source>
    </source>
</evidence>
<evidence type="ECO:0000305" key="17"/>
<evidence type="ECO:0000312" key="18">
    <source>
        <dbReference type="EMBL" id="CAA67055.1"/>
    </source>
</evidence>
<name>MAG_HUMAN</name>
<accession>P20916</accession>
<accession>B7Z2E5</accession>
<accession>F5GYC0</accession>
<accession>Q15489</accession>
<accession>Q567S4</accession>
<organism>
    <name type="scientific">Homo sapiens</name>
    <name type="common">Human</name>
    <dbReference type="NCBI Taxonomy" id="9606"/>
    <lineage>
        <taxon>Eukaryota</taxon>
        <taxon>Metazoa</taxon>
        <taxon>Chordata</taxon>
        <taxon>Craniata</taxon>
        <taxon>Vertebrata</taxon>
        <taxon>Euteleostomi</taxon>
        <taxon>Mammalia</taxon>
        <taxon>Eutheria</taxon>
        <taxon>Euarchontoglires</taxon>
        <taxon>Primates</taxon>
        <taxon>Haplorrhini</taxon>
        <taxon>Catarrhini</taxon>
        <taxon>Hominidae</taxon>
        <taxon>Homo</taxon>
    </lineage>
</organism>
<reference key="1">
    <citation type="journal article" date="1989" name="Biochem. Biophys. Res. Commun.">
        <title>cDNA cloning and amino acid sequence for human myelin-associated glycoprotein.</title>
        <authorList>
            <person name="Sato S."/>
            <person name="Fujita N."/>
            <person name="Kurihara T."/>
            <person name="Kuwano R."/>
            <person name="Sakimura K."/>
            <person name="Takahashi Y."/>
            <person name="Miyatake T."/>
        </authorList>
    </citation>
    <scope>NUCLEOTIDE SEQUENCE [MRNA] (ISOFORM 1)</scope>
</reference>
<reference key="2">
    <citation type="journal article" date="1989" name="J. Neurosci. Res.">
        <title>Molecular cloning of human myelin-associated glycoprotein.</title>
        <authorList>
            <person name="Spagnol G."/>
            <person name="Williams M."/>
            <person name="Srinivasan J."/>
            <person name="Golier J."/>
            <person name="Bauer D."/>
            <person name="Lebo R.V."/>
            <person name="Latov N."/>
        </authorList>
    </citation>
    <scope>NUCLEOTIDE SEQUENCE [MRNA] (ISOFORM 1)</scope>
    <source>
        <tissue>Brain</tissue>
    </source>
</reference>
<reference key="3">
    <citation type="journal article" date="2004" name="Nat. Genet.">
        <title>Complete sequencing and characterization of 21,243 full-length human cDNAs.</title>
        <authorList>
            <person name="Ota T."/>
            <person name="Suzuki Y."/>
            <person name="Nishikawa T."/>
            <person name="Otsuki T."/>
            <person name="Sugiyama T."/>
            <person name="Irie R."/>
            <person name="Wakamatsu A."/>
            <person name="Hayashi K."/>
            <person name="Sato H."/>
            <person name="Nagai K."/>
            <person name="Kimura K."/>
            <person name="Makita H."/>
            <person name="Sekine M."/>
            <person name="Obayashi M."/>
            <person name="Nishi T."/>
            <person name="Shibahara T."/>
            <person name="Tanaka T."/>
            <person name="Ishii S."/>
            <person name="Yamamoto J."/>
            <person name="Saito K."/>
            <person name="Kawai Y."/>
            <person name="Isono Y."/>
            <person name="Nakamura Y."/>
            <person name="Nagahari K."/>
            <person name="Murakami K."/>
            <person name="Yasuda T."/>
            <person name="Iwayanagi T."/>
            <person name="Wagatsuma M."/>
            <person name="Shiratori A."/>
            <person name="Sudo H."/>
            <person name="Hosoiri T."/>
            <person name="Kaku Y."/>
            <person name="Kodaira H."/>
            <person name="Kondo H."/>
            <person name="Sugawara M."/>
            <person name="Takahashi M."/>
            <person name="Kanda K."/>
            <person name="Yokoi T."/>
            <person name="Furuya T."/>
            <person name="Kikkawa E."/>
            <person name="Omura Y."/>
            <person name="Abe K."/>
            <person name="Kamihara K."/>
            <person name="Katsuta N."/>
            <person name="Sato K."/>
            <person name="Tanikawa M."/>
            <person name="Yamazaki M."/>
            <person name="Ninomiya K."/>
            <person name="Ishibashi T."/>
            <person name="Yamashita H."/>
            <person name="Murakawa K."/>
            <person name="Fujimori K."/>
            <person name="Tanai H."/>
            <person name="Kimata M."/>
            <person name="Watanabe M."/>
            <person name="Hiraoka S."/>
            <person name="Chiba Y."/>
            <person name="Ishida S."/>
            <person name="Ono Y."/>
            <person name="Takiguchi S."/>
            <person name="Watanabe S."/>
            <person name="Yosida M."/>
            <person name="Hotuta T."/>
            <person name="Kusano J."/>
            <person name="Kanehori K."/>
            <person name="Takahashi-Fujii A."/>
            <person name="Hara H."/>
            <person name="Tanase T.-O."/>
            <person name="Nomura Y."/>
            <person name="Togiya S."/>
            <person name="Komai F."/>
            <person name="Hara R."/>
            <person name="Takeuchi K."/>
            <person name="Arita M."/>
            <person name="Imose N."/>
            <person name="Musashino K."/>
            <person name="Yuuki H."/>
            <person name="Oshima A."/>
            <person name="Sasaki N."/>
            <person name="Aotsuka S."/>
            <person name="Yoshikawa Y."/>
            <person name="Matsunawa H."/>
            <person name="Ichihara T."/>
            <person name="Shiohata N."/>
            <person name="Sano S."/>
            <person name="Moriya S."/>
            <person name="Momiyama H."/>
            <person name="Satoh N."/>
            <person name="Takami S."/>
            <person name="Terashima Y."/>
            <person name="Suzuki O."/>
            <person name="Nakagawa S."/>
            <person name="Senoh A."/>
            <person name="Mizoguchi H."/>
            <person name="Goto Y."/>
            <person name="Shimizu F."/>
            <person name="Wakebe H."/>
            <person name="Hishigaki H."/>
            <person name="Watanabe T."/>
            <person name="Sugiyama A."/>
            <person name="Takemoto M."/>
            <person name="Kawakami B."/>
            <person name="Yamazaki M."/>
            <person name="Watanabe K."/>
            <person name="Kumagai A."/>
            <person name="Itakura S."/>
            <person name="Fukuzumi Y."/>
            <person name="Fujimori Y."/>
            <person name="Komiyama M."/>
            <person name="Tashiro H."/>
            <person name="Tanigami A."/>
            <person name="Fujiwara T."/>
            <person name="Ono T."/>
            <person name="Yamada K."/>
            <person name="Fujii Y."/>
            <person name="Ozaki K."/>
            <person name="Hirao M."/>
            <person name="Ohmori Y."/>
            <person name="Kawabata A."/>
            <person name="Hikiji T."/>
            <person name="Kobatake N."/>
            <person name="Inagaki H."/>
            <person name="Ikema Y."/>
            <person name="Okamoto S."/>
            <person name="Okitani R."/>
            <person name="Kawakami T."/>
            <person name="Noguchi S."/>
            <person name="Itoh T."/>
            <person name="Shigeta K."/>
            <person name="Senba T."/>
            <person name="Matsumura K."/>
            <person name="Nakajima Y."/>
            <person name="Mizuno T."/>
            <person name="Morinaga M."/>
            <person name="Sasaki M."/>
            <person name="Togashi T."/>
            <person name="Oyama M."/>
            <person name="Hata H."/>
            <person name="Watanabe M."/>
            <person name="Komatsu T."/>
            <person name="Mizushima-Sugano J."/>
            <person name="Satoh T."/>
            <person name="Shirai Y."/>
            <person name="Takahashi Y."/>
            <person name="Nakagawa K."/>
            <person name="Okumura K."/>
            <person name="Nagase T."/>
            <person name="Nomura N."/>
            <person name="Kikuchi H."/>
            <person name="Masuho Y."/>
            <person name="Yamashita R."/>
            <person name="Nakai K."/>
            <person name="Yada T."/>
            <person name="Nakamura Y."/>
            <person name="Ohara O."/>
            <person name="Isogai T."/>
            <person name="Sugano S."/>
        </authorList>
    </citation>
    <scope>NUCLEOTIDE SEQUENCE [LARGE SCALE MRNA] (ISOFORM 3)</scope>
    <scope>VARIANT MET-202</scope>
    <source>
        <tissue>Brain</tissue>
    </source>
</reference>
<reference key="4">
    <citation type="journal article" date="2004" name="Nature">
        <title>The DNA sequence and biology of human chromosome 19.</title>
        <authorList>
            <person name="Grimwood J."/>
            <person name="Gordon L.A."/>
            <person name="Olsen A.S."/>
            <person name="Terry A."/>
            <person name="Schmutz J."/>
            <person name="Lamerdin J.E."/>
            <person name="Hellsten U."/>
            <person name="Goodstein D."/>
            <person name="Couronne O."/>
            <person name="Tran-Gyamfi M."/>
            <person name="Aerts A."/>
            <person name="Altherr M."/>
            <person name="Ashworth L."/>
            <person name="Bajorek E."/>
            <person name="Black S."/>
            <person name="Branscomb E."/>
            <person name="Caenepeel S."/>
            <person name="Carrano A.V."/>
            <person name="Caoile C."/>
            <person name="Chan Y.M."/>
            <person name="Christensen M."/>
            <person name="Cleland C.A."/>
            <person name="Copeland A."/>
            <person name="Dalin E."/>
            <person name="Dehal P."/>
            <person name="Denys M."/>
            <person name="Detter J.C."/>
            <person name="Escobar J."/>
            <person name="Flowers D."/>
            <person name="Fotopulos D."/>
            <person name="Garcia C."/>
            <person name="Georgescu A.M."/>
            <person name="Glavina T."/>
            <person name="Gomez M."/>
            <person name="Gonzales E."/>
            <person name="Groza M."/>
            <person name="Hammon N."/>
            <person name="Hawkins T."/>
            <person name="Haydu L."/>
            <person name="Ho I."/>
            <person name="Huang W."/>
            <person name="Israni S."/>
            <person name="Jett J."/>
            <person name="Kadner K."/>
            <person name="Kimball H."/>
            <person name="Kobayashi A."/>
            <person name="Larionov V."/>
            <person name="Leem S.-H."/>
            <person name="Lopez F."/>
            <person name="Lou Y."/>
            <person name="Lowry S."/>
            <person name="Malfatti S."/>
            <person name="Martinez D."/>
            <person name="McCready P.M."/>
            <person name="Medina C."/>
            <person name="Morgan J."/>
            <person name="Nelson K."/>
            <person name="Nolan M."/>
            <person name="Ovcharenko I."/>
            <person name="Pitluck S."/>
            <person name="Pollard M."/>
            <person name="Popkie A.P."/>
            <person name="Predki P."/>
            <person name="Quan G."/>
            <person name="Ramirez L."/>
            <person name="Rash S."/>
            <person name="Retterer J."/>
            <person name="Rodriguez A."/>
            <person name="Rogers S."/>
            <person name="Salamov A."/>
            <person name="Salazar A."/>
            <person name="She X."/>
            <person name="Smith D."/>
            <person name="Slezak T."/>
            <person name="Solovyev V."/>
            <person name="Thayer N."/>
            <person name="Tice H."/>
            <person name="Tsai M."/>
            <person name="Ustaszewska A."/>
            <person name="Vo N."/>
            <person name="Wagner M."/>
            <person name="Wheeler J."/>
            <person name="Wu K."/>
            <person name="Xie G."/>
            <person name="Yang J."/>
            <person name="Dubchak I."/>
            <person name="Furey T.S."/>
            <person name="DeJong P."/>
            <person name="Dickson M."/>
            <person name="Gordon D."/>
            <person name="Eichler E.E."/>
            <person name="Pennacchio L.A."/>
            <person name="Richardson P."/>
            <person name="Stubbs L."/>
            <person name="Rokhsar D.S."/>
            <person name="Myers R.M."/>
            <person name="Rubin E.M."/>
            <person name="Lucas S.M."/>
        </authorList>
    </citation>
    <scope>NUCLEOTIDE SEQUENCE [LARGE SCALE GENOMIC DNA]</scope>
</reference>
<reference key="5">
    <citation type="journal article" date="2004" name="Genome Res.">
        <title>The status, quality, and expansion of the NIH full-length cDNA project: the Mammalian Gene Collection (MGC).</title>
        <authorList>
            <consortium name="The MGC Project Team"/>
        </authorList>
    </citation>
    <scope>NUCLEOTIDE SEQUENCE [LARGE SCALE MRNA] (ISOFORMS 1 AND 2)</scope>
    <source>
        <tissue>Brain</tissue>
    </source>
</reference>
<reference key="6">
    <citation type="journal article" date="1997" name="Brain Res. Mol. Brain Res.">
        <title>Reciprocal expression of myelin-associated glycoprotein splice variants in the adult human peripheral and central nervous systems.</title>
        <authorList>
            <person name="Miescher G.C."/>
            <person name="Luetzelschwab R."/>
            <person name="Erne B."/>
            <person name="Ferracin F."/>
            <person name="Huber S."/>
            <person name="Steck A.J."/>
        </authorList>
    </citation>
    <scope>NUCLEOTIDE SEQUENCE [MRNA] OF 528-626 (ISOFORM 2)</scope>
    <scope>ALTERNATIVE SPLICING</scope>
    <scope>TISSUE SPECIFICITY</scope>
    <source>
        <tissue evidence="18">Brain</tissue>
    </source>
</reference>
<reference key="7">
    <citation type="journal article" date="1984" name="J. Neuroimmunol.">
        <title>Myelin-associated glycoprotein (MAG) distribution in human central nervous tissue studied immunocytochemically with monoclonal antibody.</title>
        <authorList>
            <person name="Favilla J.T."/>
            <person name="Frail D.E."/>
            <person name="Palkovits C.G."/>
            <person name="Stoner G.L."/>
            <person name="Braun P.E."/>
            <person name="Webster H.D."/>
        </authorList>
    </citation>
    <scope>TISSUE SPECIFICITY</scope>
</reference>
<reference key="8">
    <citation type="journal article" date="1993" name="Biochem. Biophys. Res. Commun.">
        <title>Identification of the glycosylated sequons of human myelin-associated glycoprotein.</title>
        <authorList>
            <person name="Burger D."/>
            <person name="Pidoux L."/>
            <person name="Steck A.J."/>
        </authorList>
    </citation>
    <scope>GLYCOSYLATION AT ASN-99; ASN-106; ASN-223; ASN-246; ASN-315; ASN-406; ASN-450 AND ASN-454</scope>
    <scope>LACK OF GLYCOSYLATION AT ASN-332</scope>
</reference>
<reference key="9">
    <citation type="journal article" date="2008" name="J. Neurosci.">
        <title>Genetic variants of Nogo-66 receptor with possible association to schizophrenia block myelin inhibition of axon growth.</title>
        <authorList>
            <person name="Budel S."/>
            <person name="Padukkavidana T."/>
            <person name="Liu B.P."/>
            <person name="Feng Z."/>
            <person name="Hu F."/>
            <person name="Johnson S."/>
            <person name="Lauren J."/>
            <person name="Park J.H."/>
            <person name="McGee A.W."/>
            <person name="Liao J."/>
            <person name="Stillman A."/>
            <person name="Kim J.E."/>
            <person name="Yang B.Z."/>
            <person name="Sodi S."/>
            <person name="Gelernter J."/>
            <person name="Zhao H."/>
            <person name="Hisama F."/>
            <person name="Arnsten A.F."/>
            <person name="Strittmatter S.M."/>
        </authorList>
    </citation>
    <scope>INTERACTION WITH RTN4R</scope>
</reference>
<reference key="10">
    <citation type="journal article" date="2014" name="Science">
        <title>Exome sequencing links corticospinal motor neuron disease to common neurodegenerative disorders.</title>
        <authorList>
            <person name="Novarino G."/>
            <person name="Fenstermaker A.G."/>
            <person name="Zaki M.S."/>
            <person name="Hofree M."/>
            <person name="Silhavy J.L."/>
            <person name="Heiberg A.D."/>
            <person name="Abdellateef M."/>
            <person name="Rosti B."/>
            <person name="Scott E."/>
            <person name="Mansour L."/>
            <person name="Masri A."/>
            <person name="Kayserili H."/>
            <person name="Al-Aama J.Y."/>
            <person name="Abdel-Salam G.M."/>
            <person name="Karminejad A."/>
            <person name="Kara M."/>
            <person name="Kara B."/>
            <person name="Bozorgmehri B."/>
            <person name="Ben-Omran T."/>
            <person name="Mojahedi F."/>
            <person name="Mahmoud I.G."/>
            <person name="Bouslam N."/>
            <person name="Bouhouche A."/>
            <person name="Benomar A."/>
            <person name="Hanein S."/>
            <person name="Raymond L."/>
            <person name="Forlani S."/>
            <person name="Mascaro M."/>
            <person name="Selim L."/>
            <person name="Shehata N."/>
            <person name="Al-Allawi N."/>
            <person name="Bindu P.S."/>
            <person name="Azam M."/>
            <person name="Gunel M."/>
            <person name="Caglayan A."/>
            <person name="Bilguvar K."/>
            <person name="Tolun A."/>
            <person name="Issa M.Y."/>
            <person name="Schroth J."/>
            <person name="Spencer E.G."/>
            <person name="Rosti R.O."/>
            <person name="Akizu N."/>
            <person name="Vaux K.K."/>
            <person name="Johansen A."/>
            <person name="Koh A.A."/>
            <person name="Megahed H."/>
            <person name="Durr A."/>
            <person name="Brice A."/>
            <person name="Stevanin G."/>
            <person name="Gabriel S.B."/>
            <person name="Ideker T."/>
            <person name="Gleeson J.G."/>
        </authorList>
    </citation>
    <scope>INVOLVEMENT IN SPG75</scope>
    <scope>VARIANT SPG75 GLY-430</scope>
</reference>
<reference key="11">
    <citation type="journal article" date="2015" name="Brain">
        <title>Myelin-associated glycoprotein gene mutation causes Pelizaeus-Merzbacher disease-like disorder.</title>
        <authorList>
            <person name="Lossos A."/>
            <person name="Elazar N."/>
            <person name="Lerer I."/>
            <person name="Schueler-Furman O."/>
            <person name="Fellig Y."/>
            <person name="Glick B."/>
            <person name="Zimmerman B.E."/>
            <person name="Azulay H."/>
            <person name="Dotan S."/>
            <person name="Goldberg S."/>
            <person name="Gomori J.M."/>
            <person name="Ponger P."/>
            <person name="Newman J.P."/>
            <person name="Marreed H."/>
            <person name="Steck A.J."/>
            <person name="Schaeren-Wiemers N."/>
            <person name="Mor N."/>
            <person name="Harel M."/>
            <person name="Geiger T."/>
            <person name="Eshed-Eisenbach Y."/>
            <person name="Meiner V."/>
            <person name="Peles E."/>
        </authorList>
    </citation>
    <scope>INVOLVEMENT IN SPG75</scope>
    <scope>VARIANT SPG75 ARG-133</scope>
    <scope>CHARACTERIZATION OF VARIANT SPG75 ARG-133</scope>
    <scope>SUBCELLULAR LOCATION</scope>
    <scope>TOPOLOGY</scope>
    <scope>GLYCOSYLATION</scope>
</reference>
<reference key="12">
    <citation type="journal article" date="2016" name="Ann. Clin. Transl. Neurol.">
        <title>Neurologic syndrome associated with homozygous mutation at MAG sialic acid binding site.</title>
        <authorList>
            <person name="Roda R.H."/>
            <person name="FitzGibbon E.J."/>
            <person name="Boucekkine H."/>
            <person name="Schindler A.B."/>
            <person name="Blackstone C."/>
        </authorList>
    </citation>
    <scope>VARIANT SPG75 HIS-118</scope>
</reference>
<protein>
    <recommendedName>
        <fullName>Myelin-associated glycoprotein</fullName>
    </recommendedName>
    <alternativeName>
        <fullName>Siglec-4a</fullName>
    </alternativeName>
</protein>
<proteinExistence type="evidence at protein level"/>
<dbReference type="EMBL" id="M29273">
    <property type="protein sequence ID" value="AAA59545.1"/>
    <property type="molecule type" value="mRNA"/>
</dbReference>
<dbReference type="EMBL" id="AK294644">
    <property type="protein sequence ID" value="BAH11831.1"/>
    <property type="molecule type" value="mRNA"/>
</dbReference>
<dbReference type="EMBL" id="AC002132">
    <property type="protein sequence ID" value="AAB58805.1"/>
    <property type="molecule type" value="Genomic_DNA"/>
</dbReference>
<dbReference type="EMBL" id="AD000684">
    <property type="status" value="NOT_ANNOTATED_CDS"/>
    <property type="molecule type" value="Genomic_DNA"/>
</dbReference>
<dbReference type="EMBL" id="BC053347">
    <property type="protein sequence ID" value="AAH53347.1"/>
    <property type="molecule type" value="mRNA"/>
</dbReference>
<dbReference type="EMBL" id="BC093045">
    <property type="protein sequence ID" value="AAH93045.1"/>
    <property type="molecule type" value="mRNA"/>
</dbReference>
<dbReference type="EMBL" id="X98405">
    <property type="protein sequence ID" value="CAA67055.1"/>
    <property type="molecule type" value="mRNA"/>
</dbReference>
<dbReference type="CCDS" id="CCDS12455.1">
    <molecule id="P20916-1"/>
</dbReference>
<dbReference type="CCDS" id="CCDS12456.1">
    <molecule id="P20916-2"/>
</dbReference>
<dbReference type="CCDS" id="CCDS56090.1">
    <molecule id="P20916-3"/>
</dbReference>
<dbReference type="PIR" id="A61084">
    <property type="entry name" value="A61084"/>
</dbReference>
<dbReference type="RefSeq" id="NP_001186145.1">
    <molecule id="P20916-3"/>
    <property type="nucleotide sequence ID" value="NM_001199216.2"/>
</dbReference>
<dbReference type="RefSeq" id="NP_002352.1">
    <molecule id="P20916-1"/>
    <property type="nucleotide sequence ID" value="NM_002361.4"/>
</dbReference>
<dbReference type="RefSeq" id="NP_542167.1">
    <molecule id="P20916-2"/>
    <property type="nucleotide sequence ID" value="NM_080600.3"/>
</dbReference>
<dbReference type="SMR" id="P20916"/>
<dbReference type="BioGRID" id="110273">
    <property type="interactions" value="22"/>
</dbReference>
<dbReference type="DIP" id="DIP-58523N"/>
<dbReference type="FunCoup" id="P20916">
    <property type="interactions" value="237"/>
</dbReference>
<dbReference type="IntAct" id="P20916">
    <property type="interactions" value="6"/>
</dbReference>
<dbReference type="STRING" id="9606.ENSP00000376048"/>
<dbReference type="BindingDB" id="P20916"/>
<dbReference type="ChEMBL" id="CHEMBL5807"/>
<dbReference type="GlyCosmos" id="P20916">
    <property type="glycosylation" value="9 sites, 1 glycan"/>
</dbReference>
<dbReference type="GlyGen" id="P20916">
    <property type="glycosylation" value="10 sites, 1 N-linked glycan (1 site), 1 O-linked glycan (1 site)"/>
</dbReference>
<dbReference type="iPTMnet" id="P20916"/>
<dbReference type="PhosphoSitePlus" id="P20916"/>
<dbReference type="SwissPalm" id="P20916"/>
<dbReference type="BioMuta" id="MAG"/>
<dbReference type="DMDM" id="126689"/>
<dbReference type="MassIVE" id="P20916"/>
<dbReference type="PaxDb" id="9606-ENSP00000376048"/>
<dbReference type="PeptideAtlas" id="P20916"/>
<dbReference type="ProteomicsDB" id="24691"/>
<dbReference type="ProteomicsDB" id="53823">
    <molecule id="P20916-1"/>
</dbReference>
<dbReference type="ProteomicsDB" id="53824">
    <molecule id="P20916-2"/>
</dbReference>
<dbReference type="ABCD" id="P20916">
    <property type="antibodies" value="7 sequenced antibodies"/>
</dbReference>
<dbReference type="Antibodypedia" id="1364">
    <property type="antibodies" value="412 antibodies from 40 providers"/>
</dbReference>
<dbReference type="DNASU" id="4099"/>
<dbReference type="Ensembl" id="ENST00000361922.8">
    <molecule id="P20916-2"/>
    <property type="protein sequence ID" value="ENSP00000355234.4"/>
    <property type="gene ID" value="ENSG00000105695.15"/>
</dbReference>
<dbReference type="Ensembl" id="ENST00000392213.8">
    <molecule id="P20916-1"/>
    <property type="protein sequence ID" value="ENSP00000376048.2"/>
    <property type="gene ID" value="ENSG00000105695.15"/>
</dbReference>
<dbReference type="Ensembl" id="ENST00000537831.2">
    <molecule id="P20916-3"/>
    <property type="protein sequence ID" value="ENSP00000440695.1"/>
    <property type="gene ID" value="ENSG00000105695.15"/>
</dbReference>
<dbReference type="GeneID" id="4099"/>
<dbReference type="KEGG" id="hsa:4099"/>
<dbReference type="MANE-Select" id="ENST00000392213.8">
    <property type="protein sequence ID" value="ENSP00000376048.2"/>
    <property type="RefSeq nucleotide sequence ID" value="NM_002361.4"/>
    <property type="RefSeq protein sequence ID" value="NP_002352.1"/>
</dbReference>
<dbReference type="UCSC" id="uc002nyx.3">
    <molecule id="P20916-1"/>
    <property type="organism name" value="human"/>
</dbReference>
<dbReference type="AGR" id="HGNC:6783"/>
<dbReference type="CTD" id="4099"/>
<dbReference type="DisGeNET" id="4099"/>
<dbReference type="GeneCards" id="MAG"/>
<dbReference type="HGNC" id="HGNC:6783">
    <property type="gene designation" value="MAG"/>
</dbReference>
<dbReference type="HPA" id="ENSG00000105695">
    <property type="expression patterns" value="Tissue enriched (brain)"/>
</dbReference>
<dbReference type="MalaCards" id="MAG"/>
<dbReference type="MIM" id="159460">
    <property type="type" value="gene"/>
</dbReference>
<dbReference type="MIM" id="616680">
    <property type="type" value="phenotype"/>
</dbReference>
<dbReference type="neXtProt" id="NX_P20916"/>
<dbReference type="OpenTargets" id="ENSG00000105695"/>
<dbReference type="Orphanet" id="459056">
    <property type="disease" value="Autosomal recessive spastic paraplegia type 75"/>
</dbReference>
<dbReference type="PharmGKB" id="PA30541"/>
<dbReference type="VEuPathDB" id="HostDB:ENSG00000105695"/>
<dbReference type="eggNOG" id="KOG4475">
    <property type="taxonomic scope" value="Eukaryota"/>
</dbReference>
<dbReference type="GeneTree" id="ENSGT01120000271890"/>
<dbReference type="HOGENOM" id="CLU_020480_1_0_1"/>
<dbReference type="InParanoid" id="P20916"/>
<dbReference type="OMA" id="IIAIVCY"/>
<dbReference type="OrthoDB" id="10012075at2759"/>
<dbReference type="PAN-GO" id="P20916">
    <property type="GO annotations" value="3 GO annotations based on evolutionary models"/>
</dbReference>
<dbReference type="PhylomeDB" id="P20916"/>
<dbReference type="TreeFam" id="TF332441"/>
<dbReference type="PathwayCommons" id="P20916"/>
<dbReference type="Reactome" id="R-HSA-193634">
    <property type="pathway name" value="Axonal growth inhibition (RHOA activation)"/>
</dbReference>
<dbReference type="Reactome" id="R-HSA-210991">
    <property type="pathway name" value="Basigin interactions"/>
</dbReference>
<dbReference type="Reactome" id="R-HSA-9619665">
    <property type="pathway name" value="EGR2 and SOX10-mediated initiation of Schwann cell myelination"/>
</dbReference>
<dbReference type="SignaLink" id="P20916"/>
<dbReference type="SIGNOR" id="P20916"/>
<dbReference type="BioGRID-ORCS" id="4099">
    <property type="hits" value="18 hits in 1151 CRISPR screens"/>
</dbReference>
<dbReference type="CD-CODE" id="FB4E32DD">
    <property type="entry name" value="Presynaptic clusters and postsynaptic densities"/>
</dbReference>
<dbReference type="ChiTaRS" id="MAG">
    <property type="organism name" value="human"/>
</dbReference>
<dbReference type="GeneWiki" id="Myelin-associated_glycoprotein"/>
<dbReference type="GenomeRNAi" id="4099"/>
<dbReference type="Pharos" id="P20916">
    <property type="development level" value="Tchem"/>
</dbReference>
<dbReference type="PRO" id="PR:P20916"/>
<dbReference type="Proteomes" id="UP000005640">
    <property type="component" value="Chromosome 19"/>
</dbReference>
<dbReference type="RNAct" id="P20916">
    <property type="molecule type" value="protein"/>
</dbReference>
<dbReference type="Bgee" id="ENSG00000105695">
    <property type="expression patterns" value="Expressed in C1 segment of cervical spinal cord and 146 other cell types or tissues"/>
</dbReference>
<dbReference type="ExpressionAtlas" id="P20916">
    <property type="expression patterns" value="baseline and differential"/>
</dbReference>
<dbReference type="GO" id="GO:0043218">
    <property type="term" value="C:compact myelin"/>
    <property type="evidence" value="ECO:0000314"/>
    <property type="project" value="UniProtKB"/>
</dbReference>
<dbReference type="GO" id="GO:0045121">
    <property type="term" value="C:membrane raft"/>
    <property type="evidence" value="ECO:0007669"/>
    <property type="project" value="UniProtKB-SubCell"/>
</dbReference>
<dbReference type="GO" id="GO:0097453">
    <property type="term" value="C:mesaxon"/>
    <property type="evidence" value="ECO:0007669"/>
    <property type="project" value="Ensembl"/>
</dbReference>
<dbReference type="GO" id="GO:0043209">
    <property type="term" value="C:myelin sheath"/>
    <property type="evidence" value="ECO:0000314"/>
    <property type="project" value="UniProtKB"/>
</dbReference>
<dbReference type="GO" id="GO:0035749">
    <property type="term" value="C:myelin sheath adaxonal region"/>
    <property type="evidence" value="ECO:0007669"/>
    <property type="project" value="Ensembl"/>
</dbReference>
<dbReference type="GO" id="GO:0033270">
    <property type="term" value="C:paranode region of axon"/>
    <property type="evidence" value="ECO:0007669"/>
    <property type="project" value="Ensembl"/>
</dbReference>
<dbReference type="GO" id="GO:0005886">
    <property type="term" value="C:plasma membrane"/>
    <property type="evidence" value="ECO:0000314"/>
    <property type="project" value="UniProtKB"/>
</dbReference>
<dbReference type="GO" id="GO:0043220">
    <property type="term" value="C:Schmidt-Lanterman incisure"/>
    <property type="evidence" value="ECO:0007669"/>
    <property type="project" value="Ensembl"/>
</dbReference>
<dbReference type="GO" id="GO:0030246">
    <property type="term" value="F:carbohydrate binding"/>
    <property type="evidence" value="ECO:0007669"/>
    <property type="project" value="UniProtKB-KW"/>
</dbReference>
<dbReference type="GO" id="GO:1905576">
    <property type="term" value="F:ganglioside GT1b binding"/>
    <property type="evidence" value="ECO:0000250"/>
    <property type="project" value="UniProtKB"/>
</dbReference>
<dbReference type="GO" id="GO:0042803">
    <property type="term" value="F:protein homodimerization activity"/>
    <property type="evidence" value="ECO:0007669"/>
    <property type="project" value="Ensembl"/>
</dbReference>
<dbReference type="GO" id="GO:0019901">
    <property type="term" value="F:protein kinase binding"/>
    <property type="evidence" value="ECO:0007669"/>
    <property type="project" value="Ensembl"/>
</dbReference>
<dbReference type="GO" id="GO:0033691">
    <property type="term" value="F:sialic acid binding"/>
    <property type="evidence" value="ECO:0000250"/>
    <property type="project" value="UniProtKB"/>
</dbReference>
<dbReference type="GO" id="GO:0005102">
    <property type="term" value="F:signaling receptor binding"/>
    <property type="evidence" value="ECO:0007669"/>
    <property type="project" value="Ensembl"/>
</dbReference>
<dbReference type="GO" id="GO:0031103">
    <property type="term" value="P:axon regeneration"/>
    <property type="evidence" value="ECO:0007669"/>
    <property type="project" value="Ensembl"/>
</dbReference>
<dbReference type="GO" id="GO:0007155">
    <property type="term" value="P:cell adhesion"/>
    <property type="evidence" value="ECO:0000250"/>
    <property type="project" value="UniProtKB"/>
</dbReference>
<dbReference type="GO" id="GO:0098742">
    <property type="term" value="P:cell-cell adhesion via plasma-membrane adhesion molecules"/>
    <property type="evidence" value="ECO:0000250"/>
    <property type="project" value="UniProtKB"/>
</dbReference>
<dbReference type="GO" id="GO:0071260">
    <property type="term" value="P:cellular response to mechanical stimulus"/>
    <property type="evidence" value="ECO:0007669"/>
    <property type="project" value="Ensembl"/>
</dbReference>
<dbReference type="GO" id="GO:0032289">
    <property type="term" value="P:central nervous system myelin formation"/>
    <property type="evidence" value="ECO:0007669"/>
    <property type="project" value="Ensembl"/>
</dbReference>
<dbReference type="GO" id="GO:0030517">
    <property type="term" value="P:negative regulation of axon extension"/>
    <property type="evidence" value="ECO:0000250"/>
    <property type="project" value="UniProtKB"/>
</dbReference>
<dbReference type="GO" id="GO:0043524">
    <property type="term" value="P:negative regulation of neuron apoptotic process"/>
    <property type="evidence" value="ECO:0000250"/>
    <property type="project" value="UniProtKB"/>
</dbReference>
<dbReference type="GO" id="GO:0045665">
    <property type="term" value="P:negative regulation of neuron differentiation"/>
    <property type="evidence" value="ECO:0007669"/>
    <property type="project" value="Ensembl"/>
</dbReference>
<dbReference type="GO" id="GO:0010977">
    <property type="term" value="P:negative regulation of neuron projection development"/>
    <property type="evidence" value="ECO:0000250"/>
    <property type="project" value="UniProtKB"/>
</dbReference>
<dbReference type="GO" id="GO:0048711">
    <property type="term" value="P:positive regulation of astrocyte differentiation"/>
    <property type="evidence" value="ECO:0007669"/>
    <property type="project" value="Ensembl"/>
</dbReference>
<dbReference type="GO" id="GO:0031643">
    <property type="term" value="P:positive regulation of myelination"/>
    <property type="evidence" value="ECO:0007669"/>
    <property type="project" value="Ensembl"/>
</dbReference>
<dbReference type="GO" id="GO:0021762">
    <property type="term" value="P:substantia nigra development"/>
    <property type="evidence" value="ECO:0007007"/>
    <property type="project" value="UniProtKB"/>
</dbReference>
<dbReference type="GO" id="GO:0019226">
    <property type="term" value="P:transmission of nerve impulse"/>
    <property type="evidence" value="ECO:0007669"/>
    <property type="project" value="Ensembl"/>
</dbReference>
<dbReference type="CDD" id="cd00096">
    <property type="entry name" value="Ig"/>
    <property type="match status" value="1"/>
</dbReference>
<dbReference type="CDD" id="cd20987">
    <property type="entry name" value="IgC2_CD33_d2_like"/>
    <property type="match status" value="1"/>
</dbReference>
<dbReference type="CDD" id="cd05712">
    <property type="entry name" value="IgV_CD33"/>
    <property type="match status" value="1"/>
</dbReference>
<dbReference type="FunFam" id="2.60.40.10:FF:000475">
    <property type="entry name" value="myelin-associated glycoprotein isoform X1"/>
    <property type="match status" value="2"/>
</dbReference>
<dbReference type="FunFam" id="2.60.40.10:FF:000663">
    <property type="entry name" value="myelin-associated glycoprotein isoform X1"/>
    <property type="match status" value="1"/>
</dbReference>
<dbReference type="FunFam" id="2.60.40.10:FF:000743">
    <property type="entry name" value="myelin-associated glycoprotein isoform X1"/>
    <property type="match status" value="1"/>
</dbReference>
<dbReference type="Gene3D" id="2.60.40.10">
    <property type="entry name" value="Immunoglobulins"/>
    <property type="match status" value="4"/>
</dbReference>
<dbReference type="InterPro" id="IPR013162">
    <property type="entry name" value="CD80_C2-set"/>
</dbReference>
<dbReference type="InterPro" id="IPR007110">
    <property type="entry name" value="Ig-like_dom"/>
</dbReference>
<dbReference type="InterPro" id="IPR036179">
    <property type="entry name" value="Ig-like_dom_sf"/>
</dbReference>
<dbReference type="InterPro" id="IPR013783">
    <property type="entry name" value="Ig-like_fold"/>
</dbReference>
<dbReference type="InterPro" id="IPR003599">
    <property type="entry name" value="Ig_sub"/>
</dbReference>
<dbReference type="InterPro" id="IPR003598">
    <property type="entry name" value="Ig_sub2"/>
</dbReference>
<dbReference type="InterPro" id="IPR051036">
    <property type="entry name" value="SIGLEC"/>
</dbReference>
<dbReference type="PANTHER" id="PTHR12035:SF107">
    <property type="entry name" value="MYELIN-ASSOCIATED GLYCOPROTEIN"/>
    <property type="match status" value="1"/>
</dbReference>
<dbReference type="PANTHER" id="PTHR12035">
    <property type="entry name" value="SIALIC ACID BINDING IMMUNOGLOBULIN-LIKE LECTIN"/>
    <property type="match status" value="1"/>
</dbReference>
<dbReference type="Pfam" id="PF08205">
    <property type="entry name" value="C2-set_2"/>
    <property type="match status" value="1"/>
</dbReference>
<dbReference type="Pfam" id="PF13927">
    <property type="entry name" value="Ig_3"/>
    <property type="match status" value="2"/>
</dbReference>
<dbReference type="SMART" id="SM00409">
    <property type="entry name" value="IG"/>
    <property type="match status" value="4"/>
</dbReference>
<dbReference type="SMART" id="SM00408">
    <property type="entry name" value="IGc2"/>
    <property type="match status" value="2"/>
</dbReference>
<dbReference type="SUPFAM" id="SSF48726">
    <property type="entry name" value="Immunoglobulin"/>
    <property type="match status" value="5"/>
</dbReference>
<dbReference type="PROSITE" id="PS50835">
    <property type="entry name" value="IG_LIKE"/>
    <property type="match status" value="3"/>
</dbReference>